<name>PYRH_OCEIH</name>
<proteinExistence type="inferred from homology"/>
<sequence length="240" mass="26145">MTTARYNRVVLKLSGEALSGDQGYGIDPKVIQSISKQVKEVADLGVEVAIVVGGGNIWRGKVGSEMGMDRASADYMGMLATIMNSLALQDGLETIDVETRVQTSIEMRQVAEPYIRRKAIRHLEKKRVVIFAAGTGNPYFSTDTTAALRAAEIEAEVILMAKNNVDGVYTDDPKLNKSAKKYESLTYLEMLNEGLGVMDSTASSLCMDNNIPLIVFSIMEEGNIKRVVQGETIGTTIRGK</sequence>
<organism>
    <name type="scientific">Oceanobacillus iheyensis (strain DSM 14371 / CIP 107618 / JCM 11309 / KCTC 3954 / HTE831)</name>
    <dbReference type="NCBI Taxonomy" id="221109"/>
    <lineage>
        <taxon>Bacteria</taxon>
        <taxon>Bacillati</taxon>
        <taxon>Bacillota</taxon>
        <taxon>Bacilli</taxon>
        <taxon>Bacillales</taxon>
        <taxon>Bacillaceae</taxon>
        <taxon>Oceanobacillus</taxon>
    </lineage>
</organism>
<gene>
    <name evidence="1" type="primary">pyrH</name>
    <name type="synonym">smbA</name>
    <name type="ordered locus">OB1588</name>
</gene>
<keyword id="KW-0021">Allosteric enzyme</keyword>
<keyword id="KW-0067">ATP-binding</keyword>
<keyword id="KW-0963">Cytoplasm</keyword>
<keyword id="KW-0418">Kinase</keyword>
<keyword id="KW-0547">Nucleotide-binding</keyword>
<keyword id="KW-0665">Pyrimidine biosynthesis</keyword>
<keyword id="KW-1185">Reference proteome</keyword>
<keyword id="KW-0808">Transferase</keyword>
<dbReference type="EC" id="2.7.4.22" evidence="1"/>
<dbReference type="EMBL" id="BA000028">
    <property type="protein sequence ID" value="BAC13544.1"/>
    <property type="molecule type" value="Genomic_DNA"/>
</dbReference>
<dbReference type="RefSeq" id="WP_011065988.1">
    <property type="nucleotide sequence ID" value="NC_004193.1"/>
</dbReference>
<dbReference type="SMR" id="Q8EQV1"/>
<dbReference type="STRING" id="221109.gene:10733828"/>
<dbReference type="KEGG" id="oih:OB1588"/>
<dbReference type="eggNOG" id="COG0528">
    <property type="taxonomic scope" value="Bacteria"/>
</dbReference>
<dbReference type="HOGENOM" id="CLU_033861_0_0_9"/>
<dbReference type="OrthoDB" id="9807458at2"/>
<dbReference type="PhylomeDB" id="Q8EQV1"/>
<dbReference type="UniPathway" id="UPA00159">
    <property type="reaction ID" value="UER00275"/>
</dbReference>
<dbReference type="Proteomes" id="UP000000822">
    <property type="component" value="Chromosome"/>
</dbReference>
<dbReference type="GO" id="GO:0005737">
    <property type="term" value="C:cytoplasm"/>
    <property type="evidence" value="ECO:0007669"/>
    <property type="project" value="UniProtKB-SubCell"/>
</dbReference>
<dbReference type="GO" id="GO:0005524">
    <property type="term" value="F:ATP binding"/>
    <property type="evidence" value="ECO:0007669"/>
    <property type="project" value="UniProtKB-KW"/>
</dbReference>
<dbReference type="GO" id="GO:0033862">
    <property type="term" value="F:UMP kinase activity"/>
    <property type="evidence" value="ECO:0007669"/>
    <property type="project" value="UniProtKB-EC"/>
</dbReference>
<dbReference type="GO" id="GO:0044210">
    <property type="term" value="P:'de novo' CTP biosynthetic process"/>
    <property type="evidence" value="ECO:0007669"/>
    <property type="project" value="UniProtKB-UniRule"/>
</dbReference>
<dbReference type="GO" id="GO:0006225">
    <property type="term" value="P:UDP biosynthetic process"/>
    <property type="evidence" value="ECO:0007669"/>
    <property type="project" value="TreeGrafter"/>
</dbReference>
<dbReference type="CDD" id="cd04254">
    <property type="entry name" value="AAK_UMPK-PyrH-Ec"/>
    <property type="match status" value="1"/>
</dbReference>
<dbReference type="FunFam" id="3.40.1160.10:FF:000001">
    <property type="entry name" value="Uridylate kinase"/>
    <property type="match status" value="1"/>
</dbReference>
<dbReference type="Gene3D" id="3.40.1160.10">
    <property type="entry name" value="Acetylglutamate kinase-like"/>
    <property type="match status" value="1"/>
</dbReference>
<dbReference type="HAMAP" id="MF_01220_B">
    <property type="entry name" value="PyrH_B"/>
    <property type="match status" value="1"/>
</dbReference>
<dbReference type="InterPro" id="IPR036393">
    <property type="entry name" value="AceGlu_kinase-like_sf"/>
</dbReference>
<dbReference type="InterPro" id="IPR001048">
    <property type="entry name" value="Asp/Glu/Uridylate_kinase"/>
</dbReference>
<dbReference type="InterPro" id="IPR011817">
    <property type="entry name" value="Uridylate_kinase"/>
</dbReference>
<dbReference type="InterPro" id="IPR015963">
    <property type="entry name" value="Uridylate_kinase_bac"/>
</dbReference>
<dbReference type="NCBIfam" id="TIGR02075">
    <property type="entry name" value="pyrH_bact"/>
    <property type="match status" value="1"/>
</dbReference>
<dbReference type="PANTHER" id="PTHR42833">
    <property type="entry name" value="URIDYLATE KINASE"/>
    <property type="match status" value="1"/>
</dbReference>
<dbReference type="PANTHER" id="PTHR42833:SF4">
    <property type="entry name" value="URIDYLATE KINASE PUMPKIN, CHLOROPLASTIC"/>
    <property type="match status" value="1"/>
</dbReference>
<dbReference type="Pfam" id="PF00696">
    <property type="entry name" value="AA_kinase"/>
    <property type="match status" value="1"/>
</dbReference>
<dbReference type="PIRSF" id="PIRSF005650">
    <property type="entry name" value="Uridylate_kin"/>
    <property type="match status" value="1"/>
</dbReference>
<dbReference type="SUPFAM" id="SSF53633">
    <property type="entry name" value="Carbamate kinase-like"/>
    <property type="match status" value="1"/>
</dbReference>
<reference key="1">
    <citation type="journal article" date="2002" name="Nucleic Acids Res.">
        <title>Genome sequence of Oceanobacillus iheyensis isolated from the Iheya Ridge and its unexpected adaptive capabilities to extreme environments.</title>
        <authorList>
            <person name="Takami H."/>
            <person name="Takaki Y."/>
            <person name="Uchiyama I."/>
        </authorList>
    </citation>
    <scope>NUCLEOTIDE SEQUENCE [LARGE SCALE GENOMIC DNA]</scope>
    <source>
        <strain>DSM 14371 / CIP 107618 / JCM 11309 / KCTC 3954 / HTE831</strain>
    </source>
</reference>
<accession>Q8EQV1</accession>
<evidence type="ECO:0000255" key="1">
    <source>
        <dbReference type="HAMAP-Rule" id="MF_01220"/>
    </source>
</evidence>
<feature type="chain" id="PRO_0000143867" description="Uridylate kinase">
    <location>
        <begin position="1"/>
        <end position="240"/>
    </location>
</feature>
<feature type="region of interest" description="Involved in allosteric activation by GTP" evidence="1">
    <location>
        <begin position="20"/>
        <end position="25"/>
    </location>
</feature>
<feature type="binding site" evidence="1">
    <location>
        <begin position="12"/>
        <end position="15"/>
    </location>
    <ligand>
        <name>ATP</name>
        <dbReference type="ChEBI" id="CHEBI:30616"/>
    </ligand>
</feature>
<feature type="binding site" evidence="1">
    <location>
        <position position="54"/>
    </location>
    <ligand>
        <name>UMP</name>
        <dbReference type="ChEBI" id="CHEBI:57865"/>
    </ligand>
</feature>
<feature type="binding site" evidence="1">
    <location>
        <position position="55"/>
    </location>
    <ligand>
        <name>ATP</name>
        <dbReference type="ChEBI" id="CHEBI:30616"/>
    </ligand>
</feature>
<feature type="binding site" evidence="1">
    <location>
        <position position="59"/>
    </location>
    <ligand>
        <name>ATP</name>
        <dbReference type="ChEBI" id="CHEBI:30616"/>
    </ligand>
</feature>
<feature type="binding site" evidence="1">
    <location>
        <position position="74"/>
    </location>
    <ligand>
        <name>UMP</name>
        <dbReference type="ChEBI" id="CHEBI:57865"/>
    </ligand>
</feature>
<feature type="binding site" evidence="1">
    <location>
        <begin position="135"/>
        <end position="142"/>
    </location>
    <ligand>
        <name>UMP</name>
        <dbReference type="ChEBI" id="CHEBI:57865"/>
    </ligand>
</feature>
<feature type="binding site" evidence="1">
    <location>
        <position position="163"/>
    </location>
    <ligand>
        <name>ATP</name>
        <dbReference type="ChEBI" id="CHEBI:30616"/>
    </ligand>
</feature>
<feature type="binding site" evidence="1">
    <location>
        <position position="169"/>
    </location>
    <ligand>
        <name>ATP</name>
        <dbReference type="ChEBI" id="CHEBI:30616"/>
    </ligand>
</feature>
<feature type="binding site" evidence="1">
    <location>
        <position position="172"/>
    </location>
    <ligand>
        <name>ATP</name>
        <dbReference type="ChEBI" id="CHEBI:30616"/>
    </ligand>
</feature>
<comment type="function">
    <text evidence="1">Catalyzes the reversible phosphorylation of UMP to UDP.</text>
</comment>
<comment type="catalytic activity">
    <reaction evidence="1">
        <text>UMP + ATP = UDP + ADP</text>
        <dbReference type="Rhea" id="RHEA:24400"/>
        <dbReference type="ChEBI" id="CHEBI:30616"/>
        <dbReference type="ChEBI" id="CHEBI:57865"/>
        <dbReference type="ChEBI" id="CHEBI:58223"/>
        <dbReference type="ChEBI" id="CHEBI:456216"/>
        <dbReference type="EC" id="2.7.4.22"/>
    </reaction>
</comment>
<comment type="activity regulation">
    <text evidence="1">Allosterically activated by GTP. Inhibited by UTP.</text>
</comment>
<comment type="pathway">
    <text evidence="1">Pyrimidine metabolism; CTP biosynthesis via de novo pathway; UDP from UMP (UMPK route): step 1/1.</text>
</comment>
<comment type="subunit">
    <text evidence="1">Homohexamer.</text>
</comment>
<comment type="subcellular location">
    <subcellularLocation>
        <location evidence="1">Cytoplasm</location>
    </subcellularLocation>
</comment>
<comment type="similarity">
    <text evidence="1">Belongs to the UMP kinase family.</text>
</comment>
<protein>
    <recommendedName>
        <fullName evidence="1">Uridylate kinase</fullName>
        <shortName evidence="1">UK</shortName>
        <ecNumber evidence="1">2.7.4.22</ecNumber>
    </recommendedName>
    <alternativeName>
        <fullName evidence="1">Uridine monophosphate kinase</fullName>
        <shortName evidence="1">UMP kinase</shortName>
        <shortName evidence="1">UMPK</shortName>
    </alternativeName>
</protein>